<accession>C3K469</accession>
<reference key="1">
    <citation type="journal article" date="2009" name="Genome Biol.">
        <title>Genomic and genetic analyses of diversity and plant interactions of Pseudomonas fluorescens.</title>
        <authorList>
            <person name="Silby M.W."/>
            <person name="Cerdeno-Tarraga A.M."/>
            <person name="Vernikos G.S."/>
            <person name="Giddens S.R."/>
            <person name="Jackson R.W."/>
            <person name="Preston G.M."/>
            <person name="Zhang X.-X."/>
            <person name="Moon C.D."/>
            <person name="Gehrig S.M."/>
            <person name="Godfrey S.A.C."/>
            <person name="Knight C.G."/>
            <person name="Malone J.G."/>
            <person name="Robinson Z."/>
            <person name="Spiers A.J."/>
            <person name="Harris S."/>
            <person name="Challis G.L."/>
            <person name="Yaxley A.M."/>
            <person name="Harris D."/>
            <person name="Seeger K."/>
            <person name="Murphy L."/>
            <person name="Rutter S."/>
            <person name="Squares R."/>
            <person name="Quail M.A."/>
            <person name="Saunders E."/>
            <person name="Mavromatis K."/>
            <person name="Brettin T.S."/>
            <person name="Bentley S.D."/>
            <person name="Hothersall J."/>
            <person name="Stephens E."/>
            <person name="Thomas C.M."/>
            <person name="Parkhill J."/>
            <person name="Levy S.B."/>
            <person name="Rainey P.B."/>
            <person name="Thomson N.R."/>
        </authorList>
    </citation>
    <scope>NUCLEOTIDE SEQUENCE [LARGE SCALE GENOMIC DNA]</scope>
    <source>
        <strain>SBW25</strain>
    </source>
</reference>
<proteinExistence type="inferred from homology"/>
<comment type="similarity">
    <text evidence="1">Belongs to the bacterial ribosomal protein bL28 family.</text>
</comment>
<organism>
    <name type="scientific">Pseudomonas fluorescens (strain SBW25)</name>
    <dbReference type="NCBI Taxonomy" id="216595"/>
    <lineage>
        <taxon>Bacteria</taxon>
        <taxon>Pseudomonadati</taxon>
        <taxon>Pseudomonadota</taxon>
        <taxon>Gammaproteobacteria</taxon>
        <taxon>Pseudomonadales</taxon>
        <taxon>Pseudomonadaceae</taxon>
        <taxon>Pseudomonas</taxon>
    </lineage>
</organism>
<feature type="chain" id="PRO_1000205608" description="Large ribosomal subunit protein bL28">
    <location>
        <begin position="1"/>
        <end position="77"/>
    </location>
</feature>
<feature type="region of interest" description="Disordered" evidence="2">
    <location>
        <begin position="1"/>
        <end position="20"/>
    </location>
</feature>
<keyword id="KW-0687">Ribonucleoprotein</keyword>
<keyword id="KW-0689">Ribosomal protein</keyword>
<evidence type="ECO:0000255" key="1">
    <source>
        <dbReference type="HAMAP-Rule" id="MF_00373"/>
    </source>
</evidence>
<evidence type="ECO:0000256" key="2">
    <source>
        <dbReference type="SAM" id="MobiDB-lite"/>
    </source>
</evidence>
<evidence type="ECO:0000305" key="3"/>
<name>RL28_PSEFS</name>
<gene>
    <name evidence="1" type="primary">rpmB</name>
    <name type="ordered locus">PFLU_5980</name>
</gene>
<dbReference type="EMBL" id="AM181176">
    <property type="protein sequence ID" value="CAY53501.1"/>
    <property type="molecule type" value="Genomic_DNA"/>
</dbReference>
<dbReference type="RefSeq" id="WP_003176907.1">
    <property type="nucleotide sequence ID" value="NC_012660.1"/>
</dbReference>
<dbReference type="SMR" id="C3K469"/>
<dbReference type="STRING" id="294.SRM1_05676"/>
<dbReference type="GeneID" id="93502673"/>
<dbReference type="eggNOG" id="COG0227">
    <property type="taxonomic scope" value="Bacteria"/>
</dbReference>
<dbReference type="HOGENOM" id="CLU_064548_3_1_6"/>
<dbReference type="OrthoDB" id="9805609at2"/>
<dbReference type="GO" id="GO:0022625">
    <property type="term" value="C:cytosolic large ribosomal subunit"/>
    <property type="evidence" value="ECO:0007669"/>
    <property type="project" value="TreeGrafter"/>
</dbReference>
<dbReference type="GO" id="GO:0003735">
    <property type="term" value="F:structural constituent of ribosome"/>
    <property type="evidence" value="ECO:0007669"/>
    <property type="project" value="InterPro"/>
</dbReference>
<dbReference type="GO" id="GO:0006412">
    <property type="term" value="P:translation"/>
    <property type="evidence" value="ECO:0007669"/>
    <property type="project" value="UniProtKB-UniRule"/>
</dbReference>
<dbReference type="FunFam" id="2.30.170.40:FF:000001">
    <property type="entry name" value="50S ribosomal protein L28"/>
    <property type="match status" value="1"/>
</dbReference>
<dbReference type="Gene3D" id="2.30.170.40">
    <property type="entry name" value="Ribosomal protein L28/L24"/>
    <property type="match status" value="1"/>
</dbReference>
<dbReference type="HAMAP" id="MF_00373">
    <property type="entry name" value="Ribosomal_bL28"/>
    <property type="match status" value="1"/>
</dbReference>
<dbReference type="InterPro" id="IPR026569">
    <property type="entry name" value="Ribosomal_bL28"/>
</dbReference>
<dbReference type="InterPro" id="IPR034704">
    <property type="entry name" value="Ribosomal_bL28/bL31-like_sf"/>
</dbReference>
<dbReference type="InterPro" id="IPR001383">
    <property type="entry name" value="Ribosomal_bL28_bact-type"/>
</dbReference>
<dbReference type="InterPro" id="IPR037147">
    <property type="entry name" value="Ribosomal_bL28_sf"/>
</dbReference>
<dbReference type="NCBIfam" id="TIGR00009">
    <property type="entry name" value="L28"/>
    <property type="match status" value="1"/>
</dbReference>
<dbReference type="PANTHER" id="PTHR13528">
    <property type="entry name" value="39S RIBOSOMAL PROTEIN L28, MITOCHONDRIAL"/>
    <property type="match status" value="1"/>
</dbReference>
<dbReference type="PANTHER" id="PTHR13528:SF2">
    <property type="entry name" value="LARGE RIBOSOMAL SUBUNIT PROTEIN BL28M"/>
    <property type="match status" value="1"/>
</dbReference>
<dbReference type="Pfam" id="PF00830">
    <property type="entry name" value="Ribosomal_L28"/>
    <property type="match status" value="1"/>
</dbReference>
<dbReference type="SUPFAM" id="SSF143800">
    <property type="entry name" value="L28p-like"/>
    <property type="match status" value="1"/>
</dbReference>
<protein>
    <recommendedName>
        <fullName evidence="1">Large ribosomal subunit protein bL28</fullName>
    </recommendedName>
    <alternativeName>
        <fullName evidence="3">50S ribosomal protein L28</fullName>
    </alternativeName>
</protein>
<sequence length="77" mass="8850">MSRVCQVTGKGPVTGNNISHANNKTRRRFLPNLQHHRFWVEEEKRFVRLRVSAKGMRIIDKRGITVVLAEIRAAGKI</sequence>